<name>TRPA_SYNE7</name>
<feature type="chain" id="PRO_1000018299" description="Tryptophan synthase alpha chain">
    <location>
        <begin position="1"/>
        <end position="266"/>
    </location>
</feature>
<feature type="active site" description="Proton acceptor" evidence="1">
    <location>
        <position position="49"/>
    </location>
</feature>
<feature type="active site" description="Proton acceptor" evidence="1">
    <location>
        <position position="60"/>
    </location>
</feature>
<accession>Q31R76</accession>
<organism>
    <name type="scientific">Synechococcus elongatus (strain ATCC 33912 / PCC 7942 / FACHB-805)</name>
    <name type="common">Anacystis nidulans R2</name>
    <dbReference type="NCBI Taxonomy" id="1140"/>
    <lineage>
        <taxon>Bacteria</taxon>
        <taxon>Bacillati</taxon>
        <taxon>Cyanobacteriota</taxon>
        <taxon>Cyanophyceae</taxon>
        <taxon>Synechococcales</taxon>
        <taxon>Synechococcaceae</taxon>
        <taxon>Synechococcus</taxon>
    </lineage>
</organism>
<protein>
    <recommendedName>
        <fullName evidence="1">Tryptophan synthase alpha chain</fullName>
        <ecNumber evidence="1">4.2.1.20</ecNumber>
    </recommendedName>
</protein>
<sequence length="266" mass="28306">MTAISDCFAALRSQGRCALIPFLTAGDPDLETTRQALLALDREGADLIELGVPYSDPLADGPVIQAAATRALQAGTRLDDVLALLKDVRSQIKAPIVLFTYCNPILNRGFEAFLDQIAAAGANGLVVPDLPLEESQRLSEVAAERGIDLILLIAPTSSADRIAAISKQARGFIYLVSVTGVTGMRQGMQSRVADLLQEIRQGTDKPIGVGFGISGAEQARQVRDWGADGVIVGSAFVNRLQEQGVEGVATLCRELRQAIDRQPVLS</sequence>
<gene>
    <name evidence="1" type="primary">trpA</name>
    <name type="ordered locus">Synpcc7942_0411</name>
</gene>
<dbReference type="EC" id="4.2.1.20" evidence="1"/>
<dbReference type="EMBL" id="CP000100">
    <property type="protein sequence ID" value="ABB56443.1"/>
    <property type="molecule type" value="Genomic_DNA"/>
</dbReference>
<dbReference type="RefSeq" id="WP_011243417.1">
    <property type="nucleotide sequence ID" value="NZ_JACJTX010000002.1"/>
</dbReference>
<dbReference type="SMR" id="Q31R76"/>
<dbReference type="STRING" id="1140.Synpcc7942_0411"/>
<dbReference type="PaxDb" id="1140-Synpcc7942_0411"/>
<dbReference type="GeneID" id="72429231"/>
<dbReference type="KEGG" id="syf:Synpcc7942_0411"/>
<dbReference type="eggNOG" id="COG0159">
    <property type="taxonomic scope" value="Bacteria"/>
</dbReference>
<dbReference type="HOGENOM" id="CLU_016734_0_2_3"/>
<dbReference type="OrthoDB" id="9804578at2"/>
<dbReference type="BioCyc" id="SYNEL:SYNPCC7942_0411-MONOMER"/>
<dbReference type="UniPathway" id="UPA00035">
    <property type="reaction ID" value="UER00044"/>
</dbReference>
<dbReference type="Proteomes" id="UP000889800">
    <property type="component" value="Chromosome"/>
</dbReference>
<dbReference type="GO" id="GO:0005829">
    <property type="term" value="C:cytosol"/>
    <property type="evidence" value="ECO:0007669"/>
    <property type="project" value="TreeGrafter"/>
</dbReference>
<dbReference type="GO" id="GO:0004834">
    <property type="term" value="F:tryptophan synthase activity"/>
    <property type="evidence" value="ECO:0007669"/>
    <property type="project" value="UniProtKB-UniRule"/>
</dbReference>
<dbReference type="CDD" id="cd04724">
    <property type="entry name" value="Tryptophan_synthase_alpha"/>
    <property type="match status" value="1"/>
</dbReference>
<dbReference type="FunFam" id="3.20.20.70:FF:000037">
    <property type="entry name" value="Tryptophan synthase alpha chain"/>
    <property type="match status" value="1"/>
</dbReference>
<dbReference type="Gene3D" id="3.20.20.70">
    <property type="entry name" value="Aldolase class I"/>
    <property type="match status" value="1"/>
</dbReference>
<dbReference type="HAMAP" id="MF_00131">
    <property type="entry name" value="Trp_synth_alpha"/>
    <property type="match status" value="1"/>
</dbReference>
<dbReference type="InterPro" id="IPR013785">
    <property type="entry name" value="Aldolase_TIM"/>
</dbReference>
<dbReference type="InterPro" id="IPR011060">
    <property type="entry name" value="RibuloseP-bd_barrel"/>
</dbReference>
<dbReference type="InterPro" id="IPR018204">
    <property type="entry name" value="Trp_synthase_alpha_AS"/>
</dbReference>
<dbReference type="InterPro" id="IPR002028">
    <property type="entry name" value="Trp_synthase_suA"/>
</dbReference>
<dbReference type="NCBIfam" id="TIGR00262">
    <property type="entry name" value="trpA"/>
    <property type="match status" value="1"/>
</dbReference>
<dbReference type="PANTHER" id="PTHR43406:SF1">
    <property type="entry name" value="TRYPTOPHAN SYNTHASE ALPHA CHAIN, CHLOROPLASTIC"/>
    <property type="match status" value="1"/>
</dbReference>
<dbReference type="PANTHER" id="PTHR43406">
    <property type="entry name" value="TRYPTOPHAN SYNTHASE, ALPHA CHAIN"/>
    <property type="match status" value="1"/>
</dbReference>
<dbReference type="Pfam" id="PF00290">
    <property type="entry name" value="Trp_syntA"/>
    <property type="match status" value="1"/>
</dbReference>
<dbReference type="SUPFAM" id="SSF51366">
    <property type="entry name" value="Ribulose-phoshate binding barrel"/>
    <property type="match status" value="1"/>
</dbReference>
<dbReference type="PROSITE" id="PS00167">
    <property type="entry name" value="TRP_SYNTHASE_ALPHA"/>
    <property type="match status" value="1"/>
</dbReference>
<evidence type="ECO:0000255" key="1">
    <source>
        <dbReference type="HAMAP-Rule" id="MF_00131"/>
    </source>
</evidence>
<keyword id="KW-0028">Amino-acid biosynthesis</keyword>
<keyword id="KW-0057">Aromatic amino acid biosynthesis</keyword>
<keyword id="KW-0456">Lyase</keyword>
<keyword id="KW-1185">Reference proteome</keyword>
<keyword id="KW-0822">Tryptophan biosynthesis</keyword>
<proteinExistence type="inferred from homology"/>
<reference key="1">
    <citation type="submission" date="2005-08" db="EMBL/GenBank/DDBJ databases">
        <title>Complete sequence of chromosome 1 of Synechococcus elongatus PCC 7942.</title>
        <authorList>
            <consortium name="US DOE Joint Genome Institute"/>
            <person name="Copeland A."/>
            <person name="Lucas S."/>
            <person name="Lapidus A."/>
            <person name="Barry K."/>
            <person name="Detter J.C."/>
            <person name="Glavina T."/>
            <person name="Hammon N."/>
            <person name="Israni S."/>
            <person name="Pitluck S."/>
            <person name="Schmutz J."/>
            <person name="Larimer F."/>
            <person name="Land M."/>
            <person name="Kyrpides N."/>
            <person name="Lykidis A."/>
            <person name="Golden S."/>
            <person name="Richardson P."/>
        </authorList>
    </citation>
    <scope>NUCLEOTIDE SEQUENCE [LARGE SCALE GENOMIC DNA]</scope>
    <source>
        <strain>ATCC 33912 / PCC 7942 / FACHB-805</strain>
    </source>
</reference>
<comment type="function">
    <text evidence="1">The alpha subunit is responsible for the aldol cleavage of indoleglycerol phosphate to indole and glyceraldehyde 3-phosphate.</text>
</comment>
<comment type="catalytic activity">
    <reaction evidence="1">
        <text>(1S,2R)-1-C-(indol-3-yl)glycerol 3-phosphate + L-serine = D-glyceraldehyde 3-phosphate + L-tryptophan + H2O</text>
        <dbReference type="Rhea" id="RHEA:10532"/>
        <dbReference type="ChEBI" id="CHEBI:15377"/>
        <dbReference type="ChEBI" id="CHEBI:33384"/>
        <dbReference type="ChEBI" id="CHEBI:57912"/>
        <dbReference type="ChEBI" id="CHEBI:58866"/>
        <dbReference type="ChEBI" id="CHEBI:59776"/>
        <dbReference type="EC" id="4.2.1.20"/>
    </reaction>
</comment>
<comment type="pathway">
    <text evidence="1">Amino-acid biosynthesis; L-tryptophan biosynthesis; L-tryptophan from chorismate: step 5/5.</text>
</comment>
<comment type="subunit">
    <text evidence="1">Tetramer of two alpha and two beta chains.</text>
</comment>
<comment type="similarity">
    <text evidence="1">Belongs to the TrpA family.</text>
</comment>